<protein>
    <recommendedName>
        <fullName evidence="1">Large ribosomal subunit protein bL32</fullName>
    </recommendedName>
    <alternativeName>
        <fullName evidence="3">50S ribosomal protein L32</fullName>
    </alternativeName>
</protein>
<accession>A8IJI4</accession>
<reference key="1">
    <citation type="submission" date="2007-04" db="EMBL/GenBank/DDBJ databases">
        <title>Complete genome sequence of the nitrogen-fixing bacterium Azorhizobium caulinodans ORS571.</title>
        <authorList>
            <person name="Lee K.B."/>
            <person name="Backer P.D."/>
            <person name="Aono T."/>
            <person name="Liu C.T."/>
            <person name="Suzuki S."/>
            <person name="Suzuki T."/>
            <person name="Kaneko T."/>
            <person name="Yamada M."/>
            <person name="Tabata S."/>
            <person name="Kupfer D.M."/>
            <person name="Najar F.Z."/>
            <person name="Wiley G.B."/>
            <person name="Roe B."/>
            <person name="Binnewies T."/>
            <person name="Ussery D."/>
            <person name="Vereecke D."/>
            <person name="Gevers D."/>
            <person name="Holsters M."/>
            <person name="Oyaizu H."/>
        </authorList>
    </citation>
    <scope>NUCLEOTIDE SEQUENCE [LARGE SCALE GENOMIC DNA]</scope>
    <source>
        <strain>ATCC 43989 / DSM 5975 / JCM 20966 / LMG 6465 / NBRC 14845 / NCIMB 13405 / ORS 571</strain>
    </source>
</reference>
<organism>
    <name type="scientific">Azorhizobium caulinodans (strain ATCC 43989 / DSM 5975 / JCM 20966 / LMG 6465 / NBRC 14845 / NCIMB 13405 / ORS 571)</name>
    <dbReference type="NCBI Taxonomy" id="438753"/>
    <lineage>
        <taxon>Bacteria</taxon>
        <taxon>Pseudomonadati</taxon>
        <taxon>Pseudomonadota</taxon>
        <taxon>Alphaproteobacteria</taxon>
        <taxon>Hyphomicrobiales</taxon>
        <taxon>Xanthobacteraceae</taxon>
        <taxon>Azorhizobium</taxon>
    </lineage>
</organism>
<comment type="similarity">
    <text evidence="1">Belongs to the bacterial ribosomal protein bL32 family.</text>
</comment>
<dbReference type="EMBL" id="AP009384">
    <property type="protein sequence ID" value="BAF86308.1"/>
    <property type="molecule type" value="Genomic_DNA"/>
</dbReference>
<dbReference type="RefSeq" id="WP_012168841.1">
    <property type="nucleotide sequence ID" value="NC_009937.1"/>
</dbReference>
<dbReference type="SMR" id="A8IJI4"/>
<dbReference type="STRING" id="438753.AZC_0310"/>
<dbReference type="KEGG" id="azc:AZC_0310"/>
<dbReference type="eggNOG" id="COG0333">
    <property type="taxonomic scope" value="Bacteria"/>
</dbReference>
<dbReference type="HOGENOM" id="CLU_129084_2_2_5"/>
<dbReference type="Proteomes" id="UP000000270">
    <property type="component" value="Chromosome"/>
</dbReference>
<dbReference type="GO" id="GO:0015934">
    <property type="term" value="C:large ribosomal subunit"/>
    <property type="evidence" value="ECO:0007669"/>
    <property type="project" value="InterPro"/>
</dbReference>
<dbReference type="GO" id="GO:0003735">
    <property type="term" value="F:structural constituent of ribosome"/>
    <property type="evidence" value="ECO:0007669"/>
    <property type="project" value="InterPro"/>
</dbReference>
<dbReference type="GO" id="GO:0006412">
    <property type="term" value="P:translation"/>
    <property type="evidence" value="ECO:0007669"/>
    <property type="project" value="UniProtKB-UniRule"/>
</dbReference>
<dbReference type="Gene3D" id="1.20.5.640">
    <property type="entry name" value="Single helix bin"/>
    <property type="match status" value="1"/>
</dbReference>
<dbReference type="HAMAP" id="MF_00340">
    <property type="entry name" value="Ribosomal_bL32"/>
    <property type="match status" value="1"/>
</dbReference>
<dbReference type="InterPro" id="IPR002677">
    <property type="entry name" value="Ribosomal_bL32"/>
</dbReference>
<dbReference type="InterPro" id="IPR044957">
    <property type="entry name" value="Ribosomal_bL32_bact"/>
</dbReference>
<dbReference type="InterPro" id="IPR011332">
    <property type="entry name" value="Ribosomal_zn-bd"/>
</dbReference>
<dbReference type="NCBIfam" id="TIGR01031">
    <property type="entry name" value="rpmF_bact"/>
    <property type="match status" value="1"/>
</dbReference>
<dbReference type="PANTHER" id="PTHR35534">
    <property type="entry name" value="50S RIBOSOMAL PROTEIN L32"/>
    <property type="match status" value="1"/>
</dbReference>
<dbReference type="PANTHER" id="PTHR35534:SF1">
    <property type="entry name" value="LARGE RIBOSOMAL SUBUNIT PROTEIN BL32"/>
    <property type="match status" value="1"/>
</dbReference>
<dbReference type="Pfam" id="PF01783">
    <property type="entry name" value="Ribosomal_L32p"/>
    <property type="match status" value="1"/>
</dbReference>
<dbReference type="SUPFAM" id="SSF57829">
    <property type="entry name" value="Zn-binding ribosomal proteins"/>
    <property type="match status" value="1"/>
</dbReference>
<proteinExistence type="inferred from homology"/>
<feature type="chain" id="PRO_1000072060" description="Large ribosomal subunit protein bL32">
    <location>
        <begin position="1"/>
        <end position="62"/>
    </location>
</feature>
<feature type="region of interest" description="Disordered" evidence="2">
    <location>
        <begin position="1"/>
        <end position="62"/>
    </location>
</feature>
<feature type="compositionally biased region" description="Basic residues" evidence="2">
    <location>
        <begin position="1"/>
        <end position="16"/>
    </location>
</feature>
<feature type="compositionally biased region" description="Basic and acidic residues" evidence="2">
    <location>
        <begin position="28"/>
        <end position="44"/>
    </location>
</feature>
<gene>
    <name evidence="1" type="primary">rpmF</name>
    <name type="ordered locus">AZC_0310</name>
</gene>
<sequence length="62" mass="7146">MAVPKRKTSPSRRGMRRSADALKQPTYVEDKDSGELRRPHHLDLKTGMYRGRQILKPKTAEV</sequence>
<keyword id="KW-1185">Reference proteome</keyword>
<keyword id="KW-0687">Ribonucleoprotein</keyword>
<keyword id="KW-0689">Ribosomal protein</keyword>
<name>RL32_AZOC5</name>
<evidence type="ECO:0000255" key="1">
    <source>
        <dbReference type="HAMAP-Rule" id="MF_00340"/>
    </source>
</evidence>
<evidence type="ECO:0000256" key="2">
    <source>
        <dbReference type="SAM" id="MobiDB-lite"/>
    </source>
</evidence>
<evidence type="ECO:0000305" key="3"/>